<protein>
    <recommendedName>
        <fullName>BAG family molecular chaperone regulator 4</fullName>
        <shortName>BAG-4</shortName>
    </recommendedName>
    <alternativeName>
        <fullName>Bcl-2-associated athanogene 4</fullName>
    </alternativeName>
    <alternativeName>
        <fullName>Silencer of death domains</fullName>
    </alternativeName>
</protein>
<keyword id="KW-0002">3D-structure</keyword>
<keyword id="KW-0025">Alternative splicing</keyword>
<keyword id="KW-0143">Chaperone</keyword>
<keyword id="KW-0963">Cytoplasm</keyword>
<keyword id="KW-0488">Methylation</keyword>
<keyword id="KW-0597">Phosphoprotein</keyword>
<keyword id="KW-1267">Proteomics identification</keyword>
<keyword id="KW-1185">Reference proteome</keyword>
<gene>
    <name type="primary">BAG4</name>
    <name type="synonym">SODD</name>
</gene>
<proteinExistence type="evidence at protein level"/>
<name>BAG4_HUMAN</name>
<organism>
    <name type="scientific">Homo sapiens</name>
    <name type="common">Human</name>
    <dbReference type="NCBI Taxonomy" id="9606"/>
    <lineage>
        <taxon>Eukaryota</taxon>
        <taxon>Metazoa</taxon>
        <taxon>Chordata</taxon>
        <taxon>Craniata</taxon>
        <taxon>Vertebrata</taxon>
        <taxon>Euteleostomi</taxon>
        <taxon>Mammalia</taxon>
        <taxon>Eutheria</taxon>
        <taxon>Euarchontoglires</taxon>
        <taxon>Primates</taxon>
        <taxon>Haplorrhini</taxon>
        <taxon>Catarrhini</taxon>
        <taxon>Hominidae</taxon>
        <taxon>Homo</taxon>
    </lineage>
</organism>
<evidence type="ECO:0000250" key="1"/>
<evidence type="ECO:0000255" key="2">
    <source>
        <dbReference type="PROSITE-ProRule" id="PRU00369"/>
    </source>
</evidence>
<evidence type="ECO:0000256" key="3">
    <source>
        <dbReference type="SAM" id="MobiDB-lite"/>
    </source>
</evidence>
<evidence type="ECO:0000269" key="4">
    <source>
    </source>
</evidence>
<evidence type="ECO:0000269" key="5">
    <source>
    </source>
</evidence>
<evidence type="ECO:0000269" key="6">
    <source>
    </source>
</evidence>
<evidence type="ECO:0000303" key="7">
    <source>
    </source>
</evidence>
<evidence type="ECO:0007744" key="8">
    <source>
    </source>
</evidence>
<evidence type="ECO:0007744" key="9">
    <source>
    </source>
</evidence>
<evidence type="ECO:0007829" key="10">
    <source>
        <dbReference type="PDB" id="1M62"/>
    </source>
</evidence>
<sequence>MSALRRSGYGPSDGPSYGRYYGPGGGDVPVHPPPPLYPLRPEPPQPPISWRVRGGGPAETTWLGEGGGGDGYYPSGGAWPEPGRAGGSHQEQPPYPSYNSNYWNSTARSRAPYPSTYPVRPELQGQSLNSYTNGAYGPTYPPGPGANTASYSGAYYAPGYTQTSYSTEVPSTYRSSGNSPTPVSRWIYPQQDCQTEAPPLRGQVPGYPPSQNPGMTLPHYPYGDGNRSVPQSGPTVRPQEDAWASPGAYGMGGRYPWPSSAPSAPPGNLYMTESTSPWPSSGSPQSPPSPPVQQPKDSSYPYSQSDQSMNRHNFPCSVHQYESSGTVNNDDSDLLDSQVQYSAEPQLYGNATSDHPNNQDQSSSLPEECVPSDESTPPSIKKIIHVLEKVQYLEQEVEEFVGKKTDKAYWLLEEMLTKELLELDSVETGGQDSVRQARKEAVCKIQAILEKLEKKGL</sequence>
<accession>O95429</accession>
<accession>B4E217</accession>
<accession>O95818</accession>
<comment type="function">
    <text evidence="1 5">Inhibits the chaperone activity of HSP70/HSC70 by promoting substrate release (By similarity). Prevents constitutive TNFRSF1A signaling. Negative regulator of PRKN translocation to damaged mitochondria.</text>
</comment>
<comment type="subunit">
    <text evidence="4 5 6">Binds to the ATPase domain of HSP/HSC70 chaperones. Binds to the death domain of TNFRSF1A in the absence of TNF and thereby prevents binding of adapter molecules such as TRADD or TRAF2. Binds to the death domain of TNFRSF12. Interacts with PRKN.</text>
</comment>
<comment type="interaction">
    <interactant intactId="EBI-2949658">
        <id>O95429</id>
    </interactant>
    <interactant intactId="EBI-11096309">
        <id>Q9NYB9-2</id>
        <label>ABI2</label>
    </interactant>
    <organismsDiffer>false</organismsDiffer>
    <experiments>5</experiments>
</comment>
<comment type="interaction">
    <interactant intactId="EBI-2949658">
        <id>O95429</id>
    </interactant>
    <interactant intactId="EBI-12007918">
        <id>O00154-4</id>
        <label>ACOT7</label>
    </interactant>
    <organismsDiffer>false</organismsDiffer>
    <experiments>3</experiments>
</comment>
<comment type="interaction">
    <interactant intactId="EBI-2949658">
        <id>O95429</id>
    </interactant>
    <interactant intactId="EBI-10173507">
        <id>Q6UY14-3</id>
        <label>ADAMTSL4</label>
    </interactant>
    <organismsDiffer>false</organismsDiffer>
    <experiments>3</experiments>
</comment>
<comment type="interaction">
    <interactant intactId="EBI-2949658">
        <id>O95429</id>
    </interactant>
    <interactant intactId="EBI-10186621">
        <id>Q9NP73-4</id>
        <label>ALG13</label>
    </interactant>
    <organismsDiffer>false</organismsDiffer>
    <experiments>3</experiments>
</comment>
<comment type="interaction">
    <interactant intactId="EBI-2949658">
        <id>O95429</id>
    </interactant>
    <interactant intactId="EBI-948603">
        <id>Q03989</id>
        <label>ARID5A</label>
    </interactant>
    <organismsDiffer>false</organismsDiffer>
    <experiments>3</experiments>
</comment>
<comment type="interaction">
    <interactant intactId="EBI-2949658">
        <id>O95429</id>
    </interactant>
    <interactant intactId="EBI-745689">
        <id>Q7L5A3</id>
        <label>ATOSB</label>
    </interactant>
    <organismsDiffer>false</organismsDiffer>
    <experiments>5</experiments>
</comment>
<comment type="interaction">
    <interactant intactId="EBI-2949658">
        <id>O95429</id>
    </interactant>
    <interactant intactId="EBI-12811889">
        <id>Q9Y6H3</id>
        <label>ATP23</label>
    </interactant>
    <organismsDiffer>false</organismsDiffer>
    <experiments>3</experiments>
</comment>
<comment type="interaction">
    <interactant intactId="EBI-2949658">
        <id>O95429</id>
    </interactant>
    <interactant intactId="EBI-10174813">
        <id>A8KA13</id>
        <label>BCL6B</label>
    </interactant>
    <organismsDiffer>false</organismsDiffer>
    <experiments>3</experiments>
</comment>
<comment type="interaction">
    <interactant intactId="EBI-2949658">
        <id>O95429</id>
    </interactant>
    <interactant intactId="EBI-2548012">
        <id>Q9H2G9</id>
        <label>BLZF1</label>
    </interactant>
    <organismsDiffer>false</organismsDiffer>
    <experiments>3</experiments>
</comment>
<comment type="interaction">
    <interactant intactId="EBI-2949658">
        <id>O95429</id>
    </interactant>
    <interactant intactId="EBI-12009184">
        <id>Q5JPI3-2</id>
        <label>C3orf38</label>
    </interactant>
    <organismsDiffer>false</organismsDiffer>
    <experiments>4</experiments>
</comment>
<comment type="interaction">
    <interactant intactId="EBI-2949658">
        <id>O95429</id>
    </interactant>
    <interactant intactId="EBI-520342">
        <id>P42575</id>
        <label>CASP2</label>
    </interactant>
    <organismsDiffer>false</organismsDiffer>
    <experiments>3</experiments>
</comment>
<comment type="interaction">
    <interactant intactId="EBI-2949658">
        <id>O95429</id>
    </interactant>
    <interactant intactId="EBI-11954144">
        <id>O43439-4</id>
        <label>CBFA2T2</label>
    </interactant>
    <organismsDiffer>false</organismsDiffer>
    <experiments>3</experiments>
</comment>
<comment type="interaction">
    <interactant intactId="EBI-2949658">
        <id>O95429</id>
    </interactant>
    <interactant intactId="EBI-13331299">
        <id>Q8IXM7</id>
        <label>CIMAP1C</label>
    </interactant>
    <organismsDiffer>false</organismsDiffer>
    <experiments>3</experiments>
</comment>
<comment type="interaction">
    <interactant intactId="EBI-2949658">
        <id>O95429</id>
    </interactant>
    <interactant intactId="EBI-374238">
        <id>Q9NPI6</id>
        <label>DCP1A</label>
    </interactant>
    <organismsDiffer>false</organismsDiffer>
    <experiments>6</experiments>
</comment>
<comment type="interaction">
    <interactant intactId="EBI-2949658">
        <id>O95429</id>
    </interactant>
    <interactant intactId="EBI-521595">
        <id>Q8IZD4</id>
        <label>DCP1B</label>
    </interactant>
    <organismsDiffer>false</organismsDiffer>
    <experiments>3</experiments>
</comment>
<comment type="interaction">
    <interactant intactId="EBI-2949658">
        <id>O95429</id>
    </interactant>
    <interactant intactId="EBI-742054">
        <id>Q96D03</id>
        <label>DDIT4L</label>
    </interactant>
    <organismsDiffer>false</organismsDiffer>
    <experiments>3</experiments>
</comment>
<comment type="interaction">
    <interactant intactId="EBI-2949658">
        <id>O95429</id>
    </interactant>
    <interactant intactId="EBI-357552">
        <id>Q99615</id>
        <label>DNAJC7</label>
    </interactant>
    <organismsDiffer>false</organismsDiffer>
    <experiments>3</experiments>
</comment>
<comment type="interaction">
    <interactant intactId="EBI-2949658">
        <id>O95429</id>
    </interactant>
    <interactant intactId="EBI-948630">
        <id>Q86Y13</id>
        <label>DZIP3</label>
    </interactant>
    <organismsDiffer>false</organismsDiffer>
    <experiments>3</experiments>
</comment>
<comment type="interaction">
    <interactant intactId="EBI-2949658">
        <id>O95429</id>
    </interactant>
    <interactant intactId="EBI-536772">
        <id>Q12805</id>
        <label>EFEMP1</label>
    </interactant>
    <organismsDiffer>false</organismsDiffer>
    <experiments>3</experiments>
</comment>
<comment type="interaction">
    <interactant intactId="EBI-2949658">
        <id>O95429</id>
    </interactant>
    <interactant intactId="EBI-10486892">
        <id>Q96A10</id>
        <label>ERVK3-1</label>
    </interactant>
    <organismsDiffer>false</organismsDiffer>
    <experiments>3</experiments>
</comment>
<comment type="interaction">
    <interactant intactId="EBI-2949658">
        <id>O95429</id>
    </interactant>
    <interactant intactId="EBI-2807642">
        <id>Q8WU58</id>
        <label>FAM222B</label>
    </interactant>
    <organismsDiffer>false</organismsDiffer>
    <experiments>3</experiments>
</comment>
<comment type="interaction">
    <interactant intactId="EBI-2949658">
        <id>O95429</id>
    </interactant>
    <interactant intactId="EBI-2513774">
        <id>O95363</id>
        <label>FARS2</label>
    </interactant>
    <organismsDiffer>false</organismsDiffer>
    <experiments>3</experiments>
</comment>
<comment type="interaction">
    <interactant intactId="EBI-2949658">
        <id>O95429</id>
    </interactant>
    <interactant intactId="EBI-713259">
        <id>P02794</id>
        <label>FTH1</label>
    </interactant>
    <organismsDiffer>false</organismsDiffer>
    <experiments>4</experiments>
</comment>
<comment type="interaction">
    <interactant intactId="EBI-2949658">
        <id>O95429</id>
    </interactant>
    <interactant intactId="EBI-10691738">
        <id>P06241-3</id>
        <label>FYN</label>
    </interactant>
    <organismsDiffer>false</organismsDiffer>
    <experiments>3</experiments>
</comment>
<comment type="interaction">
    <interactant intactId="EBI-2949658">
        <id>O95429</id>
    </interactant>
    <interactant intactId="EBI-751540">
        <id>O95872</id>
        <label>GPANK1</label>
    </interactant>
    <organismsDiffer>false</organismsDiffer>
    <experiments>3</experiments>
</comment>
<comment type="interaction">
    <interactant intactId="EBI-2949658">
        <id>O95429</id>
    </interactant>
    <interactant intactId="EBI-713355">
        <id>Q13227</id>
        <label>GPS2</label>
    </interactant>
    <organismsDiffer>false</organismsDiffer>
    <experiments>3</experiments>
</comment>
<comment type="interaction">
    <interactant intactId="EBI-2949658">
        <id>O95429</id>
    </interactant>
    <interactant intactId="EBI-740785">
        <id>P49639</id>
        <label>HOXA1</label>
    </interactant>
    <organismsDiffer>false</organismsDiffer>
    <experiments>3</experiments>
</comment>
<comment type="interaction">
    <interactant intactId="EBI-2949658">
        <id>O95429</id>
    </interactant>
    <interactant intactId="EBI-2556750">
        <id>Q03933</id>
        <label>HSF2</label>
    </interactant>
    <organismsDiffer>false</organismsDiffer>
    <experiments>2</experiments>
</comment>
<comment type="interaction">
    <interactant intactId="EBI-2949658">
        <id>O95429</id>
    </interactant>
    <interactant intactId="EBI-354912">
        <id>P34931</id>
        <label>HSPA1L</label>
    </interactant>
    <organismsDiffer>false</organismsDiffer>
    <experiments>4</experiments>
</comment>
<comment type="interaction">
    <interactant intactId="EBI-2949658">
        <id>O95429</id>
    </interactant>
    <interactant intactId="EBI-356991">
        <id>P54652</id>
        <label>HSPA2</label>
    </interactant>
    <organismsDiffer>false</organismsDiffer>
    <experiments>5</experiments>
</comment>
<comment type="interaction">
    <interactant intactId="EBI-2949658">
        <id>O95429</id>
    </interactant>
    <interactant intactId="EBI-355106">
        <id>P17066</id>
        <label>HSPA6</label>
    </interactant>
    <organismsDiffer>false</organismsDiffer>
    <experiments>3</experiments>
</comment>
<comment type="interaction">
    <interactant intactId="EBI-2949658">
        <id>O95429</id>
    </interactant>
    <interactant intactId="EBI-351896">
        <id>P11142</id>
        <label>HSPA8</label>
    </interactant>
    <organismsDiffer>false</organismsDiffer>
    <experiments>6</experiments>
</comment>
<comment type="interaction">
    <interactant intactId="EBI-2949658">
        <id>O95429</id>
    </interactant>
    <interactant intactId="EBI-12188567">
        <id>P53990-3</id>
        <label>IST1</label>
    </interactant>
    <organismsDiffer>false</organismsDiffer>
    <experiments>3</experiments>
</comment>
<comment type="interaction">
    <interactant intactId="EBI-2949658">
        <id>O95429</id>
    </interactant>
    <interactant intactId="EBI-2511344">
        <id>Q8NC69</id>
        <label>KCTD6</label>
    </interactant>
    <organismsDiffer>false</organismsDiffer>
    <experiments>3</experiments>
</comment>
<comment type="interaction">
    <interactant intactId="EBI-2949658">
        <id>O95429</id>
    </interactant>
    <interactant intactId="EBI-11954971">
        <id>Q96MP8-2</id>
        <label>KCTD7</label>
    </interactant>
    <organismsDiffer>false</organismsDiffer>
    <experiments>3</experiments>
</comment>
<comment type="interaction">
    <interactant intactId="EBI-2949658">
        <id>O95429</id>
    </interactant>
    <interactant intactId="EBI-355878">
        <id>P33176</id>
        <label>KIF5B</label>
    </interactant>
    <organismsDiffer>false</organismsDiffer>
    <experiments>3</experiments>
</comment>
<comment type="interaction">
    <interactant intactId="EBI-2949658">
        <id>O95429</id>
    </interactant>
    <interactant intactId="EBI-11953996">
        <id>Q3LI77</id>
        <label>KRTAP13-4</label>
    </interactant>
    <organismsDiffer>false</organismsDiffer>
    <experiments>3</experiments>
</comment>
<comment type="interaction">
    <interactant intactId="EBI-2949658">
        <id>O95429</id>
    </interactant>
    <interactant intactId="EBI-739863">
        <id>Q9BQ66</id>
        <label>KRTAP4-12</label>
    </interactant>
    <organismsDiffer>false</organismsDiffer>
    <experiments>3</experiments>
</comment>
<comment type="interaction">
    <interactant intactId="EBI-2949658">
        <id>O95429</id>
    </interactant>
    <interactant intactId="EBI-10172511">
        <id>Q9BYR5</id>
        <label>KRTAP4-2</label>
    </interactant>
    <organismsDiffer>false</organismsDiffer>
    <experiments>3</experiments>
</comment>
<comment type="interaction">
    <interactant intactId="EBI-2949658">
        <id>O95429</id>
    </interactant>
    <interactant intactId="EBI-11958132">
        <id>Q9BYR3</id>
        <label>KRTAP4-4</label>
    </interactant>
    <organismsDiffer>false</organismsDiffer>
    <experiments>3</experiments>
</comment>
<comment type="interaction">
    <interactant intactId="EBI-2949658">
        <id>O95429</id>
    </interactant>
    <interactant intactId="EBI-11993254">
        <id>Q9BYR2</id>
        <label>KRTAP4-5</label>
    </interactant>
    <organismsDiffer>false</organismsDiffer>
    <experiments>3</experiments>
</comment>
<comment type="interaction">
    <interactant intactId="EBI-2949658">
        <id>O95429</id>
    </interactant>
    <interactant intactId="EBI-22311199">
        <id>Q3LI67</id>
        <label>KRTAP6-3</label>
    </interactant>
    <organismsDiffer>false</organismsDiffer>
    <experiments>5</experiments>
</comment>
<comment type="interaction">
    <interactant intactId="EBI-2949658">
        <id>O95429</id>
    </interactant>
    <interactant intactId="EBI-9088686">
        <id>Q14847-2</id>
        <label>LASP1</label>
    </interactant>
    <organismsDiffer>false</organismsDiffer>
    <experiments>3</experiments>
</comment>
<comment type="interaction">
    <interactant intactId="EBI-2949658">
        <id>O95429</id>
    </interactant>
    <interactant intactId="EBI-716006">
        <id>Q9Y5V3</id>
        <label>MAGED1</label>
    </interactant>
    <organismsDiffer>false</organismsDiffer>
    <experiments>3</experiments>
</comment>
<comment type="interaction">
    <interactant intactId="EBI-2949658">
        <id>O95429</id>
    </interactant>
    <interactant intactId="EBI-19944212">
        <id>A8MW99</id>
        <label>MEI4</label>
    </interactant>
    <organismsDiffer>false</organismsDiffer>
    <experiments>3</experiments>
</comment>
<comment type="interaction">
    <interactant intactId="EBI-2949658">
        <id>O95429</id>
    </interactant>
    <interactant intactId="EBI-744402">
        <id>Q9NP98</id>
        <label>MYOZ1</label>
    </interactant>
    <organismsDiffer>false</organismsDiffer>
    <experiments>3</experiments>
</comment>
<comment type="interaction">
    <interactant intactId="EBI-2949658">
        <id>O95429</id>
    </interactant>
    <interactant intactId="EBI-5662487">
        <id>Q8TDC0</id>
        <label>MYOZ3</label>
    </interactant>
    <organismsDiffer>false</organismsDiffer>
    <experiments>3</experiments>
</comment>
<comment type="interaction">
    <interactant intactId="EBI-2949658">
        <id>O95429</id>
    </interactant>
    <interactant intactId="EBI-2858213">
        <id>Q86VE0</id>
        <label>MYPOP</label>
    </interactant>
    <organismsDiffer>false</organismsDiffer>
    <experiments>3</experiments>
</comment>
<comment type="interaction">
    <interactant intactId="EBI-2949658">
        <id>O95429</id>
    </interactant>
    <interactant intactId="EBI-10234557">
        <id>Q14990</id>
        <label>ODF1</label>
    </interactant>
    <organismsDiffer>false</organismsDiffer>
    <experiments>3</experiments>
</comment>
<comment type="interaction">
    <interactant intactId="EBI-2949658">
        <id>O95429</id>
    </interactant>
    <interactant intactId="EBI-10181968">
        <id>Q7Z4N8</id>
        <label>P4HA3</label>
    </interactant>
    <organismsDiffer>false</organismsDiffer>
    <experiments>3</experiments>
</comment>
<comment type="interaction">
    <interactant intactId="EBI-2949658">
        <id>O95429</id>
    </interactant>
    <interactant intactId="EBI-352915">
        <id>O75340</id>
        <label>PDCD6</label>
    </interactant>
    <organismsDiffer>false</organismsDiffer>
    <experiments>3</experiments>
</comment>
<comment type="interaction">
    <interactant intactId="EBI-2949658">
        <id>O95429</id>
    </interactant>
    <interactant intactId="EBI-724639">
        <id>Q9UBV8</id>
        <label>PEF1</label>
    </interactant>
    <organismsDiffer>false</organismsDiffer>
    <experiments>5</experiments>
</comment>
<comment type="interaction">
    <interactant intactId="EBI-2949658">
        <id>O95429</id>
    </interactant>
    <interactant intactId="EBI-1050125">
        <id>O15173</id>
        <label>PGRMC2</label>
    </interactant>
    <organismsDiffer>false</organismsDiffer>
    <experiments>5</experiments>
</comment>
<comment type="interaction">
    <interactant intactId="EBI-2949658">
        <id>O95429</id>
    </interactant>
    <interactant intactId="EBI-2339674">
        <id>Q5T6S3</id>
        <label>PHF19</label>
    </interactant>
    <organismsDiffer>false</organismsDiffer>
    <experiments>3</experiments>
</comment>
<comment type="interaction">
    <interactant intactId="EBI-2949658">
        <id>O95429</id>
    </interactant>
    <interactant intactId="EBI-12226639">
        <id>Q8IXY8</id>
        <label>PPIL6</label>
    </interactant>
    <organismsDiffer>false</organismsDiffer>
    <experiments>3</experiments>
</comment>
<comment type="interaction">
    <interactant intactId="EBI-2949658">
        <id>O95429</id>
    </interactant>
    <interactant intactId="EBI-357828">
        <id>P28074</id>
        <label>PSMB5</label>
    </interactant>
    <organismsDiffer>false</organismsDiffer>
    <experiments>5</experiments>
</comment>
<comment type="interaction">
    <interactant intactId="EBI-2949658">
        <id>O95429</id>
    </interactant>
    <interactant intactId="EBI-2959680">
        <id>Q53H96</id>
        <label>PYCR3</label>
    </interactant>
    <organismsDiffer>false</organismsDiffer>
    <experiments>3</experiments>
</comment>
<comment type="interaction">
    <interactant intactId="EBI-2949658">
        <id>O95429</id>
    </interactant>
    <interactant intactId="EBI-744023">
        <id>Q9BTL3</id>
        <label>RAMAC</label>
    </interactant>
    <organismsDiffer>false</organismsDiffer>
    <experiments>6</experiments>
</comment>
<comment type="interaction">
    <interactant intactId="EBI-2949658">
        <id>O95429</id>
    </interactant>
    <interactant intactId="EBI-12001422">
        <id>Q01196-8</id>
        <label>RUNX1</label>
    </interactant>
    <organismsDiffer>false</organismsDiffer>
    <experiments>3</experiments>
</comment>
<comment type="interaction">
    <interactant intactId="EBI-2949658">
        <id>O95429</id>
    </interactant>
    <interactant intactId="EBI-11986417">
        <id>Q9UPU9-3</id>
        <label>SAMD4A</label>
    </interactant>
    <organismsDiffer>false</organismsDiffer>
    <experiments>3</experiments>
</comment>
<comment type="interaction">
    <interactant intactId="EBI-2949658">
        <id>O95429</id>
    </interactant>
    <interactant intactId="EBI-3957636">
        <id>Q8IYX7</id>
        <label>SAXO1</label>
    </interactant>
    <organismsDiffer>false</organismsDiffer>
    <experiments>3</experiments>
</comment>
<comment type="interaction">
    <interactant intactId="EBI-2949658">
        <id>O95429</id>
    </interactant>
    <interactant intactId="EBI-12000762">
        <id>Q7Z5V6-2</id>
        <label>SAXO4</label>
    </interactant>
    <organismsDiffer>false</organismsDiffer>
    <experiments>6</experiments>
</comment>
<comment type="interaction">
    <interactant intactId="EBI-2949658">
        <id>O95429</id>
    </interactant>
    <interactant intactId="EBI-2130111">
        <id>Q8TEC5</id>
        <label>SH3RF2</label>
    </interactant>
    <organismsDiffer>false</organismsDiffer>
    <experiments>3</experiments>
</comment>
<comment type="interaction">
    <interactant intactId="EBI-2949658">
        <id>O95429</id>
    </interactant>
    <interactant intactId="EBI-11522811">
        <id>Q8IUQ4-2</id>
        <label>SIAH1</label>
    </interactant>
    <organismsDiffer>false</organismsDiffer>
    <experiments>3</experiments>
</comment>
<comment type="interaction">
    <interactant intactId="EBI-2949658">
        <id>O95429</id>
    </interactant>
    <interactant intactId="EBI-372475">
        <id>P14678-2</id>
        <label>SNRPB</label>
    </interactant>
    <organismsDiffer>false</organismsDiffer>
    <experiments>5</experiments>
</comment>
<comment type="interaction">
    <interactant intactId="EBI-2949658">
        <id>O95429</id>
    </interactant>
    <interactant intactId="EBI-766589">
        <id>P09234</id>
        <label>SNRPC</label>
    </interactant>
    <organismsDiffer>false</organismsDiffer>
    <experiments>3</experiments>
</comment>
<comment type="interaction">
    <interactant intactId="EBI-2949658">
        <id>O95429</id>
    </interactant>
    <interactant intactId="EBI-12035119">
        <id>O75177-5</id>
        <label>SS18L1</label>
    </interactant>
    <organismsDiffer>false</organismsDiffer>
    <experiments>3</experiments>
</comment>
<comment type="interaction">
    <interactant intactId="EBI-2949658">
        <id>O95429</id>
    </interactant>
    <interactant intactId="EBI-3921347">
        <id>P51687</id>
        <label>SUOX</label>
    </interactant>
    <organismsDiffer>false</organismsDiffer>
    <experiments>3</experiments>
</comment>
<comment type="interaction">
    <interactant intactId="EBI-2949658">
        <id>O95429</id>
    </interactant>
    <interactant intactId="EBI-13092532">
        <id>Q6DHY5</id>
        <label>TBC1D3G</label>
    </interactant>
    <organismsDiffer>false</organismsDiffer>
    <experiments>3</experiments>
</comment>
<comment type="interaction">
    <interactant intactId="EBI-2949658">
        <id>O95429</id>
    </interactant>
    <interactant intactId="EBI-3258000">
        <id>Q9P0N9</id>
        <label>TBC1D7</label>
    </interactant>
    <organismsDiffer>false</organismsDiffer>
    <experiments>5</experiments>
</comment>
<comment type="interaction">
    <interactant intactId="EBI-2949658">
        <id>O95429</id>
    </interactant>
    <interactant intactId="EBI-727338">
        <id>O95988</id>
        <label>TCL1B</label>
    </interactant>
    <organismsDiffer>false</organismsDiffer>
    <experiments>3</experiments>
</comment>
<comment type="interaction">
    <interactant intactId="EBI-2949658">
        <id>O95429</id>
    </interactant>
    <interactant intactId="EBI-10239812">
        <id>Q96M29</id>
        <label>TEKT5</label>
    </interactant>
    <organismsDiffer>false</organismsDiffer>
    <experiments>3</experiments>
</comment>
<comment type="interaction">
    <interactant intactId="EBI-2949658">
        <id>O95429</id>
    </interactant>
    <interactant intactId="EBI-11952651">
        <id>Q7Z6R9</id>
        <label>TFAP2D</label>
    </interactant>
    <organismsDiffer>false</organismsDiffer>
    <experiments>5</experiments>
</comment>
<comment type="interaction">
    <interactant intactId="EBI-2949658">
        <id>O95429</id>
    </interactant>
    <interactant intactId="EBI-715869">
        <id>Q9GZM7</id>
        <label>TINAGL1</label>
    </interactant>
    <organismsDiffer>false</organismsDiffer>
    <experiments>3</experiments>
</comment>
<comment type="interaction">
    <interactant intactId="EBI-2949658">
        <id>O95429</id>
    </interactant>
    <interactant intactId="EBI-11741437">
        <id>Q08117-2</id>
        <label>TLE5</label>
    </interactant>
    <organismsDiffer>false</organismsDiffer>
    <experiments>3</experiments>
</comment>
<comment type="interaction">
    <interactant intactId="EBI-2949658">
        <id>O95429</id>
    </interactant>
    <interactant intactId="EBI-8451480">
        <id>O75865-2</id>
        <label>TRAPPC6A</label>
    </interactant>
    <organismsDiffer>false</organismsDiffer>
    <experiments>3</experiments>
</comment>
<comment type="interaction">
    <interactant intactId="EBI-2949658">
        <id>O95429</id>
    </interactant>
    <interactant intactId="EBI-346882">
        <id>Q99816</id>
        <label>TSG101</label>
    </interactant>
    <organismsDiffer>false</organismsDiffer>
    <experiments>3</experiments>
</comment>
<comment type="interaction">
    <interactant intactId="EBI-2949658">
        <id>O95429</id>
    </interactant>
    <interactant intactId="EBI-10180829">
        <id>Q7KZS0</id>
        <label>UBE2I</label>
    </interactant>
    <organismsDiffer>false</organismsDiffer>
    <experiments>3</experiments>
</comment>
<comment type="interaction">
    <interactant intactId="EBI-2949658">
        <id>O95429</id>
    </interactant>
    <interactant intactId="EBI-12817837">
        <id>Q9H9P5-5</id>
        <label>UNKL</label>
    </interactant>
    <organismsDiffer>false</organismsDiffer>
    <experiments>3</experiments>
</comment>
<comment type="interaction">
    <interactant intactId="EBI-2949658">
        <id>O95429</id>
    </interactant>
    <interactant intactId="EBI-12074414">
        <id>Q9UPT9-2</id>
        <label>USP22</label>
    </interactant>
    <organismsDiffer>false</organismsDiffer>
    <experiments>3</experiments>
</comment>
<comment type="interaction">
    <interactant intactId="EBI-2949658">
        <id>O95429</id>
    </interactant>
    <interactant intactId="EBI-2559305">
        <id>A5D8V6</id>
        <label>VPS37C</label>
    </interactant>
    <organismsDiffer>false</organismsDiffer>
    <experiments>3</experiments>
</comment>
<comment type="interaction">
    <interactant intactId="EBI-2949658">
        <id>O95429</id>
    </interactant>
    <interactant intactId="EBI-714373">
        <id>Q96K62</id>
        <label>ZBTB45</label>
    </interactant>
    <organismsDiffer>false</organismsDiffer>
    <experiments>3</experiments>
</comment>
<comment type="interaction">
    <interactant intactId="EBI-2949658">
        <id>O95429</id>
    </interactant>
    <interactant intactId="EBI-722671">
        <id>O15062</id>
        <label>ZBTB5</label>
    </interactant>
    <organismsDiffer>false</organismsDiffer>
    <experiments>3</experiments>
</comment>
<comment type="interaction">
    <interactant intactId="EBI-2949658">
        <id>O95429</id>
    </interactant>
    <interactant intactId="EBI-11962760">
        <id>Q9NZV7</id>
        <label>ZIM2</label>
    </interactant>
    <organismsDiffer>false</organismsDiffer>
    <experiments>3</experiments>
</comment>
<comment type="interaction">
    <interactant intactId="EBI-2949658">
        <id>O95429</id>
    </interactant>
    <interactant intactId="EBI-9356749">
        <id>Q53FC7</id>
    </interactant>
    <organismsDiffer>false</organismsDiffer>
    <experiments>2</experiments>
</comment>
<comment type="interaction">
    <interactant intactId="EBI-2949658">
        <id>O95429</id>
    </interactant>
    <interactant intactId="EBI-750454">
        <id>Q96EJ4</id>
    </interactant>
    <organismsDiffer>false</organismsDiffer>
    <experiments>3</experiments>
</comment>
<comment type="interaction">
    <interactant intactId="EBI-2949658">
        <id>O95429</id>
    </interactant>
    <interactant intactId="EBI-25475850">
        <id>P0DTC4</id>
        <label>E</label>
    </interactant>
    <organismsDiffer>true</organismsDiffer>
    <experiments>3</experiments>
</comment>
<comment type="interaction">
    <interactant intactId="EBI-2949658">
        <id>O95429</id>
    </interactant>
    <interactant intactId="EBI-25475862">
        <id>PRO_0000449622</id>
        <label>rep</label>
        <dbReference type="UniProtKB" id="P0DTD1"/>
    </interactant>
    <organismsDiffer>true</organismsDiffer>
    <experiments>3</experiments>
</comment>
<comment type="subcellular location">
    <subcellularLocation>
        <location>Cytoplasm</location>
    </subcellularLocation>
</comment>
<comment type="alternative products">
    <event type="alternative splicing"/>
    <isoform>
        <id>O95429-1</id>
        <name>1</name>
        <sequence type="displayed"/>
    </isoform>
    <isoform>
        <id>O95429-2</id>
        <name>2</name>
        <sequence type="described" ref="VSP_042741"/>
    </isoform>
</comment>
<comment type="tissue specificity">
    <text>Ubiquitous.</text>
</comment>
<dbReference type="EMBL" id="AF095194">
    <property type="protein sequence ID" value="AAD16123.2"/>
    <property type="molecule type" value="mRNA"/>
</dbReference>
<dbReference type="EMBL" id="AF111116">
    <property type="protein sequence ID" value="AAD05226.1"/>
    <property type="molecule type" value="mRNA"/>
</dbReference>
<dbReference type="EMBL" id="AK304072">
    <property type="protein sequence ID" value="BAG64979.1"/>
    <property type="molecule type" value="mRNA"/>
</dbReference>
<dbReference type="EMBL" id="AC084024">
    <property type="status" value="NOT_ANNOTATED_CDS"/>
    <property type="molecule type" value="Genomic_DNA"/>
</dbReference>
<dbReference type="EMBL" id="BC038505">
    <property type="protein sequence ID" value="AAH38505.2"/>
    <property type="molecule type" value="mRNA"/>
</dbReference>
<dbReference type="CCDS" id="CCDS56533.1">
    <molecule id="O95429-2"/>
</dbReference>
<dbReference type="CCDS" id="CCDS6104.1">
    <molecule id="O95429-1"/>
</dbReference>
<dbReference type="RefSeq" id="NP_001191807.1">
    <molecule id="O95429-2"/>
    <property type="nucleotide sequence ID" value="NM_001204878.2"/>
</dbReference>
<dbReference type="RefSeq" id="NP_004865.1">
    <molecule id="O95429-1"/>
    <property type="nucleotide sequence ID" value="NM_004874.4"/>
</dbReference>
<dbReference type="PDB" id="1M62">
    <property type="method" value="NMR"/>
    <property type="chains" value="A=376-457"/>
</dbReference>
<dbReference type="PDB" id="1M7K">
    <property type="method" value="NMR"/>
    <property type="chains" value="A=358-456"/>
</dbReference>
<dbReference type="PDBsum" id="1M62"/>
<dbReference type="PDBsum" id="1M7K"/>
<dbReference type="SMR" id="O95429"/>
<dbReference type="BioGRID" id="114906">
    <property type="interactions" value="243"/>
</dbReference>
<dbReference type="FunCoup" id="O95429">
    <property type="interactions" value="2261"/>
</dbReference>
<dbReference type="IntAct" id="O95429">
    <property type="interactions" value="184"/>
</dbReference>
<dbReference type="MINT" id="O95429"/>
<dbReference type="STRING" id="9606.ENSP00000287322"/>
<dbReference type="GlyGen" id="O95429">
    <property type="glycosylation" value="2 sites, 1 O-linked glycan (2 sites)"/>
</dbReference>
<dbReference type="iPTMnet" id="O95429"/>
<dbReference type="PhosphoSitePlus" id="O95429"/>
<dbReference type="BioMuta" id="BAG4"/>
<dbReference type="jPOST" id="O95429"/>
<dbReference type="MassIVE" id="O95429"/>
<dbReference type="PaxDb" id="9606-ENSP00000287322"/>
<dbReference type="PeptideAtlas" id="O95429"/>
<dbReference type="ProteomicsDB" id="50875">
    <molecule id="O95429-1"/>
</dbReference>
<dbReference type="ProteomicsDB" id="50876">
    <molecule id="O95429-2"/>
</dbReference>
<dbReference type="Pumba" id="O95429"/>
<dbReference type="Antibodypedia" id="4434">
    <property type="antibodies" value="396 antibodies from 41 providers"/>
</dbReference>
<dbReference type="DNASU" id="9530"/>
<dbReference type="Ensembl" id="ENST00000287322.5">
    <molecule id="O95429-1"/>
    <property type="protein sequence ID" value="ENSP00000287322.4"/>
    <property type="gene ID" value="ENSG00000156735.11"/>
</dbReference>
<dbReference type="Ensembl" id="ENST00000432471.6">
    <molecule id="O95429-2"/>
    <property type="protein sequence ID" value="ENSP00000393298.2"/>
    <property type="gene ID" value="ENSG00000156735.11"/>
</dbReference>
<dbReference type="GeneID" id="9530"/>
<dbReference type="KEGG" id="hsa:9530"/>
<dbReference type="MANE-Select" id="ENST00000287322.5">
    <property type="protein sequence ID" value="ENSP00000287322.4"/>
    <property type="RefSeq nucleotide sequence ID" value="NM_004874.4"/>
    <property type="RefSeq protein sequence ID" value="NP_004865.1"/>
</dbReference>
<dbReference type="UCSC" id="uc003xky.3">
    <molecule id="O95429-1"/>
    <property type="organism name" value="human"/>
</dbReference>
<dbReference type="AGR" id="HGNC:940"/>
<dbReference type="CTD" id="9530"/>
<dbReference type="DisGeNET" id="9530"/>
<dbReference type="GeneCards" id="BAG4"/>
<dbReference type="HGNC" id="HGNC:940">
    <property type="gene designation" value="BAG4"/>
</dbReference>
<dbReference type="HPA" id="ENSG00000156735">
    <property type="expression patterns" value="Low tissue specificity"/>
</dbReference>
<dbReference type="MIM" id="603884">
    <property type="type" value="gene"/>
</dbReference>
<dbReference type="neXtProt" id="NX_O95429"/>
<dbReference type="OpenTargets" id="ENSG00000156735"/>
<dbReference type="PharmGKB" id="PA25240"/>
<dbReference type="VEuPathDB" id="HostDB:ENSG00000156735"/>
<dbReference type="eggNOG" id="KOG4361">
    <property type="taxonomic scope" value="Eukaryota"/>
</dbReference>
<dbReference type="GeneTree" id="ENSGT00940000158936"/>
<dbReference type="HOGENOM" id="CLU_051025_0_0_1"/>
<dbReference type="InParanoid" id="O95429"/>
<dbReference type="OMA" id="WNSARPR"/>
<dbReference type="OrthoDB" id="8614100at2759"/>
<dbReference type="PAN-GO" id="O95429">
    <property type="GO annotations" value="7 GO annotations based on evolutionary models"/>
</dbReference>
<dbReference type="PhylomeDB" id="O95429"/>
<dbReference type="TreeFam" id="TF102013"/>
<dbReference type="PathwayCommons" id="O95429"/>
<dbReference type="Reactome" id="R-HSA-3371453">
    <property type="pathway name" value="Regulation of HSF1-mediated heat shock response"/>
</dbReference>
<dbReference type="Reactome" id="R-HSA-5655302">
    <property type="pathway name" value="Signaling by FGFR1 in disease"/>
</dbReference>
<dbReference type="Reactome" id="R-HSA-75893">
    <property type="pathway name" value="TNF signaling"/>
</dbReference>
<dbReference type="Reactome" id="R-HSA-8853336">
    <property type="pathway name" value="Signaling by plasma membrane FGFR1 fusions"/>
</dbReference>
<dbReference type="SignaLink" id="O95429"/>
<dbReference type="SIGNOR" id="O95429"/>
<dbReference type="BioGRID-ORCS" id="9530">
    <property type="hits" value="26 hits in 1159 CRISPR screens"/>
</dbReference>
<dbReference type="CD-CODE" id="232F8A39">
    <property type="entry name" value="P-body"/>
</dbReference>
<dbReference type="CD-CODE" id="DEE660B4">
    <property type="entry name" value="Stress granule"/>
</dbReference>
<dbReference type="ChiTaRS" id="BAG4">
    <property type="organism name" value="human"/>
</dbReference>
<dbReference type="EvolutionaryTrace" id="O95429"/>
<dbReference type="GeneWiki" id="BAG4"/>
<dbReference type="GenomeRNAi" id="9530"/>
<dbReference type="Pharos" id="O95429">
    <property type="development level" value="Tbio"/>
</dbReference>
<dbReference type="PRO" id="PR:O95429"/>
<dbReference type="Proteomes" id="UP000005640">
    <property type="component" value="Chromosome 8"/>
</dbReference>
<dbReference type="RNAct" id="O95429">
    <property type="molecule type" value="protein"/>
</dbReference>
<dbReference type="Bgee" id="ENSG00000156735">
    <property type="expression patterns" value="Expressed in Brodmann (1909) area 23 and 188 other cell types or tissues"/>
</dbReference>
<dbReference type="ExpressionAtlas" id="O95429">
    <property type="expression patterns" value="baseline and differential"/>
</dbReference>
<dbReference type="GO" id="GO:0005737">
    <property type="term" value="C:cytoplasm"/>
    <property type="evidence" value="ECO:0000318"/>
    <property type="project" value="GO_Central"/>
</dbReference>
<dbReference type="GO" id="GO:0005829">
    <property type="term" value="C:cytosol"/>
    <property type="evidence" value="ECO:0000314"/>
    <property type="project" value="UniProtKB"/>
</dbReference>
<dbReference type="GO" id="GO:0016020">
    <property type="term" value="C:membrane"/>
    <property type="evidence" value="ECO:0000318"/>
    <property type="project" value="GO_Central"/>
</dbReference>
<dbReference type="GO" id="GO:0005634">
    <property type="term" value="C:nucleus"/>
    <property type="evidence" value="ECO:0000314"/>
    <property type="project" value="UniProtKB"/>
</dbReference>
<dbReference type="GO" id="GO:0005886">
    <property type="term" value="C:plasma membrane"/>
    <property type="evidence" value="ECO:0000314"/>
    <property type="project" value="UniProtKB"/>
</dbReference>
<dbReference type="GO" id="GO:0000774">
    <property type="term" value="F:adenyl-nucleotide exchange factor activity"/>
    <property type="evidence" value="ECO:0000318"/>
    <property type="project" value="GO_Central"/>
</dbReference>
<dbReference type="GO" id="GO:0044877">
    <property type="term" value="F:protein-containing complex binding"/>
    <property type="evidence" value="ECO:0007669"/>
    <property type="project" value="Ensembl"/>
</dbReference>
<dbReference type="GO" id="GO:0051087">
    <property type="term" value="F:protein-folding chaperone binding"/>
    <property type="evidence" value="ECO:0000318"/>
    <property type="project" value="GO_Central"/>
</dbReference>
<dbReference type="GO" id="GO:0003723">
    <property type="term" value="F:RNA binding"/>
    <property type="evidence" value="ECO:0007005"/>
    <property type="project" value="UniProtKB"/>
</dbReference>
<dbReference type="GO" id="GO:0031625">
    <property type="term" value="F:ubiquitin protein ligase binding"/>
    <property type="evidence" value="ECO:0000353"/>
    <property type="project" value="ParkinsonsUK-UCL"/>
</dbReference>
<dbReference type="GO" id="GO:0071364">
    <property type="term" value="P:cellular response to epidermal growth factor stimulus"/>
    <property type="evidence" value="ECO:0007669"/>
    <property type="project" value="Ensembl"/>
</dbReference>
<dbReference type="GO" id="GO:0071356">
    <property type="term" value="P:cellular response to tumor necrosis factor"/>
    <property type="evidence" value="ECO:0000314"/>
    <property type="project" value="UniProtKB"/>
</dbReference>
<dbReference type="GO" id="GO:0043066">
    <property type="term" value="P:negative regulation of apoptotic process"/>
    <property type="evidence" value="ECO:0000304"/>
    <property type="project" value="ProtInc"/>
</dbReference>
<dbReference type="GO" id="GO:0090367">
    <property type="term" value="P:negative regulation of mRNA modification"/>
    <property type="evidence" value="ECO:0007669"/>
    <property type="project" value="Ensembl"/>
</dbReference>
<dbReference type="GO" id="GO:1903215">
    <property type="term" value="P:negative regulation of protein targeting to mitochondrion"/>
    <property type="evidence" value="ECO:0000315"/>
    <property type="project" value="ParkinsonsUK-UCL"/>
</dbReference>
<dbReference type="GO" id="GO:0030838">
    <property type="term" value="P:positive regulation of actin filament polymerization"/>
    <property type="evidence" value="ECO:0007669"/>
    <property type="project" value="Ensembl"/>
</dbReference>
<dbReference type="GO" id="GO:0045785">
    <property type="term" value="P:positive regulation of cell adhesion"/>
    <property type="evidence" value="ECO:0007669"/>
    <property type="project" value="Ensembl"/>
</dbReference>
<dbReference type="GO" id="GO:0010763">
    <property type="term" value="P:positive regulation of fibroblast migration"/>
    <property type="evidence" value="ECO:0007669"/>
    <property type="project" value="Ensembl"/>
</dbReference>
<dbReference type="GO" id="GO:0051897">
    <property type="term" value="P:positive regulation of phosphatidylinositol 3-kinase/protein kinase B signal transduction"/>
    <property type="evidence" value="ECO:0007669"/>
    <property type="project" value="Ensembl"/>
</dbReference>
<dbReference type="GO" id="GO:0051496">
    <property type="term" value="P:positive regulation of stress fiber assembly"/>
    <property type="evidence" value="ECO:0007669"/>
    <property type="project" value="Ensembl"/>
</dbReference>
<dbReference type="GO" id="GO:0006457">
    <property type="term" value="P:protein folding"/>
    <property type="evidence" value="ECO:0000304"/>
    <property type="project" value="ProtInc"/>
</dbReference>
<dbReference type="GO" id="GO:0072659">
    <property type="term" value="P:protein localization to plasma membrane"/>
    <property type="evidence" value="ECO:0007669"/>
    <property type="project" value="Ensembl"/>
</dbReference>
<dbReference type="GO" id="GO:0050821">
    <property type="term" value="P:protein stabilization"/>
    <property type="evidence" value="ECO:0000318"/>
    <property type="project" value="GO_Central"/>
</dbReference>
<dbReference type="GO" id="GO:0097178">
    <property type="term" value="P:ruffle assembly"/>
    <property type="evidence" value="ECO:0007669"/>
    <property type="project" value="Ensembl"/>
</dbReference>
<dbReference type="DisProt" id="DP02361"/>
<dbReference type="FunFam" id="1.20.58.120:FF:000001">
    <property type="entry name" value="BAG family molecular chaperone regulator 4"/>
    <property type="match status" value="1"/>
</dbReference>
<dbReference type="Gene3D" id="1.20.58.120">
    <property type="entry name" value="BAG domain"/>
    <property type="match status" value="1"/>
</dbReference>
<dbReference type="InterPro" id="IPR039773">
    <property type="entry name" value="BAG_chaperone_regulator"/>
</dbReference>
<dbReference type="InterPro" id="IPR036533">
    <property type="entry name" value="BAG_dom_sf"/>
</dbReference>
<dbReference type="InterPro" id="IPR003103">
    <property type="entry name" value="BAG_domain"/>
</dbReference>
<dbReference type="PANTHER" id="PTHR12329:SF10">
    <property type="entry name" value="BAG FAMILY MOLECULAR CHAPERONE REGULATOR 4"/>
    <property type="match status" value="1"/>
</dbReference>
<dbReference type="PANTHER" id="PTHR12329">
    <property type="entry name" value="BCL2-ASSOCIATED ATHANOGENE"/>
    <property type="match status" value="1"/>
</dbReference>
<dbReference type="Pfam" id="PF02179">
    <property type="entry name" value="BAG"/>
    <property type="match status" value="1"/>
</dbReference>
<dbReference type="SMART" id="SM00264">
    <property type="entry name" value="BAG"/>
    <property type="match status" value="1"/>
</dbReference>
<dbReference type="SUPFAM" id="SSF63491">
    <property type="entry name" value="BAG domain"/>
    <property type="match status" value="1"/>
</dbReference>
<dbReference type="PROSITE" id="PS51035">
    <property type="entry name" value="BAG"/>
    <property type="match status" value="1"/>
</dbReference>
<feature type="chain" id="PRO_0000088870" description="BAG family molecular chaperone regulator 4">
    <location>
        <begin position="1"/>
        <end position="457"/>
    </location>
</feature>
<feature type="domain" description="BAG" evidence="2">
    <location>
        <begin position="379"/>
        <end position="456"/>
    </location>
</feature>
<feature type="region of interest" description="Disordered" evidence="3">
    <location>
        <begin position="1"/>
        <end position="101"/>
    </location>
</feature>
<feature type="region of interest" description="Disordered" evidence="3">
    <location>
        <begin position="113"/>
        <end position="136"/>
    </location>
</feature>
<feature type="region of interest" description="Disordered" evidence="3">
    <location>
        <begin position="166"/>
        <end position="333"/>
    </location>
</feature>
<feature type="region of interest" description="Disordered" evidence="3">
    <location>
        <begin position="347"/>
        <end position="377"/>
    </location>
</feature>
<feature type="compositionally biased region" description="Low complexity" evidence="3">
    <location>
        <begin position="8"/>
        <end position="20"/>
    </location>
</feature>
<feature type="compositionally biased region" description="Pro residues" evidence="3">
    <location>
        <begin position="30"/>
        <end position="47"/>
    </location>
</feature>
<feature type="compositionally biased region" description="Polar residues" evidence="3">
    <location>
        <begin position="166"/>
        <end position="182"/>
    </location>
</feature>
<feature type="compositionally biased region" description="Low complexity" evidence="3">
    <location>
        <begin position="274"/>
        <end position="284"/>
    </location>
</feature>
<feature type="compositionally biased region" description="Low complexity" evidence="3">
    <location>
        <begin position="294"/>
        <end position="308"/>
    </location>
</feature>
<feature type="compositionally biased region" description="Polar residues" evidence="3">
    <location>
        <begin position="320"/>
        <end position="333"/>
    </location>
</feature>
<feature type="compositionally biased region" description="Polar residues" evidence="3">
    <location>
        <begin position="347"/>
        <end position="365"/>
    </location>
</feature>
<feature type="modified residue" description="Phosphoserine" evidence="8">
    <location>
        <position position="7"/>
    </location>
</feature>
<feature type="modified residue" description="Omega-N-methylarginine" evidence="9">
    <location>
        <position position="40"/>
    </location>
</feature>
<feature type="modified residue" description="Omega-N-methylarginine" evidence="9">
    <location>
        <position position="53"/>
    </location>
</feature>
<feature type="modified residue" description="Omega-N-methylarginine" evidence="9">
    <location>
        <position position="108"/>
    </location>
</feature>
<feature type="modified residue" description="Omega-N-methylarginine" evidence="9">
    <location>
        <position position="185"/>
    </location>
</feature>
<feature type="splice variant" id="VSP_042741" description="In isoform 2." evidence="7">
    <location>
        <begin position="90"/>
        <end position="125"/>
    </location>
</feature>
<feature type="mutagenesis site" description="Reduces interaction with HSP70." evidence="4">
    <original>E</original>
    <variation>A</variation>
    <location>
        <position position="414"/>
    </location>
</feature>
<feature type="mutagenesis site" description="Abolishes interaction with HSP70." evidence="4">
    <original>D</original>
    <variation>A</variation>
    <location>
        <position position="424"/>
    </location>
</feature>
<feature type="mutagenesis site" description="Reduces interaction with HSP70." evidence="4">
    <original>RK</original>
    <variation>AA</variation>
    <location>
        <begin position="438"/>
        <end position="439"/>
    </location>
</feature>
<feature type="mutagenesis site" description="Abolishes interaction with HSP70." evidence="4">
    <original>Q</original>
    <variation>A</variation>
    <location>
        <position position="446"/>
    </location>
</feature>
<feature type="helix" evidence="10">
    <location>
        <begin position="380"/>
        <end position="399"/>
    </location>
</feature>
<feature type="helix" evidence="10">
    <location>
        <begin position="407"/>
        <end position="423"/>
    </location>
</feature>
<feature type="helix" evidence="10">
    <location>
        <begin position="432"/>
        <end position="456"/>
    </location>
</feature>
<reference key="1">
    <citation type="journal article" date="1999" name="J. Biol. Chem.">
        <title>An evolutionarily conserved family of Hsp70/Hsc70 molecular chaperone regulators.</title>
        <authorList>
            <person name="Takayama S."/>
            <person name="Xie Z."/>
            <person name="Reed J.C."/>
        </authorList>
    </citation>
    <scope>NUCLEOTIDE SEQUENCE [MRNA] (ISOFORM 1)</scope>
    <source>
        <tissue>Leukemic T-cell</tissue>
    </source>
</reference>
<reference key="2">
    <citation type="journal article" date="1999" name="Science">
        <title>Prevention of constitutive TNF receptor 1 signaling by silencer of death domains.</title>
        <authorList>
            <person name="Jiang Y."/>
            <person name="Woronicz J.D."/>
            <person name="Liu W."/>
            <person name="Goeddel D.V."/>
        </authorList>
    </citation>
    <scope>NUCLEOTIDE SEQUENCE [MRNA] (ISOFORM 1)</scope>
    <scope>INTERACTION WITH TNFRSF1A AND TNFRSF12</scope>
    <source>
        <tissue>Leukemic T-cell</tissue>
    </source>
</reference>
<reference key="3">
    <citation type="journal article" date="1999" name="Science">
        <authorList>
            <person name="Jiang Y."/>
            <person name="Woronicz J.D."/>
            <person name="Liu W."/>
            <person name="Goeddel D.V."/>
        </authorList>
    </citation>
    <scope>ERRATUM OF PUBMED:9915703</scope>
</reference>
<reference key="4">
    <citation type="journal article" date="2004" name="Nat. Genet.">
        <title>Complete sequencing and characterization of 21,243 full-length human cDNAs.</title>
        <authorList>
            <person name="Ota T."/>
            <person name="Suzuki Y."/>
            <person name="Nishikawa T."/>
            <person name="Otsuki T."/>
            <person name="Sugiyama T."/>
            <person name="Irie R."/>
            <person name="Wakamatsu A."/>
            <person name="Hayashi K."/>
            <person name="Sato H."/>
            <person name="Nagai K."/>
            <person name="Kimura K."/>
            <person name="Makita H."/>
            <person name="Sekine M."/>
            <person name="Obayashi M."/>
            <person name="Nishi T."/>
            <person name="Shibahara T."/>
            <person name="Tanaka T."/>
            <person name="Ishii S."/>
            <person name="Yamamoto J."/>
            <person name="Saito K."/>
            <person name="Kawai Y."/>
            <person name="Isono Y."/>
            <person name="Nakamura Y."/>
            <person name="Nagahari K."/>
            <person name="Murakami K."/>
            <person name="Yasuda T."/>
            <person name="Iwayanagi T."/>
            <person name="Wagatsuma M."/>
            <person name="Shiratori A."/>
            <person name="Sudo H."/>
            <person name="Hosoiri T."/>
            <person name="Kaku Y."/>
            <person name="Kodaira H."/>
            <person name="Kondo H."/>
            <person name="Sugawara M."/>
            <person name="Takahashi M."/>
            <person name="Kanda K."/>
            <person name="Yokoi T."/>
            <person name="Furuya T."/>
            <person name="Kikkawa E."/>
            <person name="Omura Y."/>
            <person name="Abe K."/>
            <person name="Kamihara K."/>
            <person name="Katsuta N."/>
            <person name="Sato K."/>
            <person name="Tanikawa M."/>
            <person name="Yamazaki M."/>
            <person name="Ninomiya K."/>
            <person name="Ishibashi T."/>
            <person name="Yamashita H."/>
            <person name="Murakawa K."/>
            <person name="Fujimori K."/>
            <person name="Tanai H."/>
            <person name="Kimata M."/>
            <person name="Watanabe M."/>
            <person name="Hiraoka S."/>
            <person name="Chiba Y."/>
            <person name="Ishida S."/>
            <person name="Ono Y."/>
            <person name="Takiguchi S."/>
            <person name="Watanabe S."/>
            <person name="Yosida M."/>
            <person name="Hotuta T."/>
            <person name="Kusano J."/>
            <person name="Kanehori K."/>
            <person name="Takahashi-Fujii A."/>
            <person name="Hara H."/>
            <person name="Tanase T.-O."/>
            <person name="Nomura Y."/>
            <person name="Togiya S."/>
            <person name="Komai F."/>
            <person name="Hara R."/>
            <person name="Takeuchi K."/>
            <person name="Arita M."/>
            <person name="Imose N."/>
            <person name="Musashino K."/>
            <person name="Yuuki H."/>
            <person name="Oshima A."/>
            <person name="Sasaki N."/>
            <person name="Aotsuka S."/>
            <person name="Yoshikawa Y."/>
            <person name="Matsunawa H."/>
            <person name="Ichihara T."/>
            <person name="Shiohata N."/>
            <person name="Sano S."/>
            <person name="Moriya S."/>
            <person name="Momiyama H."/>
            <person name="Satoh N."/>
            <person name="Takami S."/>
            <person name="Terashima Y."/>
            <person name="Suzuki O."/>
            <person name="Nakagawa S."/>
            <person name="Senoh A."/>
            <person name="Mizoguchi H."/>
            <person name="Goto Y."/>
            <person name="Shimizu F."/>
            <person name="Wakebe H."/>
            <person name="Hishigaki H."/>
            <person name="Watanabe T."/>
            <person name="Sugiyama A."/>
            <person name="Takemoto M."/>
            <person name="Kawakami B."/>
            <person name="Yamazaki M."/>
            <person name="Watanabe K."/>
            <person name="Kumagai A."/>
            <person name="Itakura S."/>
            <person name="Fukuzumi Y."/>
            <person name="Fujimori Y."/>
            <person name="Komiyama M."/>
            <person name="Tashiro H."/>
            <person name="Tanigami A."/>
            <person name="Fujiwara T."/>
            <person name="Ono T."/>
            <person name="Yamada K."/>
            <person name="Fujii Y."/>
            <person name="Ozaki K."/>
            <person name="Hirao M."/>
            <person name="Ohmori Y."/>
            <person name="Kawabata A."/>
            <person name="Hikiji T."/>
            <person name="Kobatake N."/>
            <person name="Inagaki H."/>
            <person name="Ikema Y."/>
            <person name="Okamoto S."/>
            <person name="Okitani R."/>
            <person name="Kawakami T."/>
            <person name="Noguchi S."/>
            <person name="Itoh T."/>
            <person name="Shigeta K."/>
            <person name="Senba T."/>
            <person name="Matsumura K."/>
            <person name="Nakajima Y."/>
            <person name="Mizuno T."/>
            <person name="Morinaga M."/>
            <person name="Sasaki M."/>
            <person name="Togashi T."/>
            <person name="Oyama M."/>
            <person name="Hata H."/>
            <person name="Watanabe M."/>
            <person name="Komatsu T."/>
            <person name="Mizushima-Sugano J."/>
            <person name="Satoh T."/>
            <person name="Shirai Y."/>
            <person name="Takahashi Y."/>
            <person name="Nakagawa K."/>
            <person name="Okumura K."/>
            <person name="Nagase T."/>
            <person name="Nomura N."/>
            <person name="Kikuchi H."/>
            <person name="Masuho Y."/>
            <person name="Yamashita R."/>
            <person name="Nakai K."/>
            <person name="Yada T."/>
            <person name="Nakamura Y."/>
            <person name="Ohara O."/>
            <person name="Isogai T."/>
            <person name="Sugano S."/>
        </authorList>
    </citation>
    <scope>NUCLEOTIDE SEQUENCE [LARGE SCALE MRNA] (ISOFORM 2)</scope>
    <source>
        <tissue>Trachea</tissue>
    </source>
</reference>
<reference key="5">
    <citation type="journal article" date="2006" name="Nature">
        <title>DNA sequence and analysis of human chromosome 8.</title>
        <authorList>
            <person name="Nusbaum C."/>
            <person name="Mikkelsen T.S."/>
            <person name="Zody M.C."/>
            <person name="Asakawa S."/>
            <person name="Taudien S."/>
            <person name="Garber M."/>
            <person name="Kodira C.D."/>
            <person name="Schueler M.G."/>
            <person name="Shimizu A."/>
            <person name="Whittaker C.A."/>
            <person name="Chang J.L."/>
            <person name="Cuomo C.A."/>
            <person name="Dewar K."/>
            <person name="FitzGerald M.G."/>
            <person name="Yang X."/>
            <person name="Allen N.R."/>
            <person name="Anderson S."/>
            <person name="Asakawa T."/>
            <person name="Blechschmidt K."/>
            <person name="Bloom T."/>
            <person name="Borowsky M.L."/>
            <person name="Butler J."/>
            <person name="Cook A."/>
            <person name="Corum B."/>
            <person name="DeArellano K."/>
            <person name="DeCaprio D."/>
            <person name="Dooley K.T."/>
            <person name="Dorris L. III"/>
            <person name="Engels R."/>
            <person name="Gloeckner G."/>
            <person name="Hafez N."/>
            <person name="Hagopian D.S."/>
            <person name="Hall J.L."/>
            <person name="Ishikawa S.K."/>
            <person name="Jaffe D.B."/>
            <person name="Kamat A."/>
            <person name="Kudoh J."/>
            <person name="Lehmann R."/>
            <person name="Lokitsang T."/>
            <person name="Macdonald P."/>
            <person name="Major J.E."/>
            <person name="Matthews C.D."/>
            <person name="Mauceli E."/>
            <person name="Menzel U."/>
            <person name="Mihalev A.H."/>
            <person name="Minoshima S."/>
            <person name="Murayama Y."/>
            <person name="Naylor J.W."/>
            <person name="Nicol R."/>
            <person name="Nguyen C."/>
            <person name="O'Leary S.B."/>
            <person name="O'Neill K."/>
            <person name="Parker S.C.J."/>
            <person name="Polley A."/>
            <person name="Raymond C.K."/>
            <person name="Reichwald K."/>
            <person name="Rodriguez J."/>
            <person name="Sasaki T."/>
            <person name="Schilhabel M."/>
            <person name="Siddiqui R."/>
            <person name="Smith C.L."/>
            <person name="Sneddon T.P."/>
            <person name="Talamas J.A."/>
            <person name="Tenzin P."/>
            <person name="Topham K."/>
            <person name="Venkataraman V."/>
            <person name="Wen G."/>
            <person name="Yamazaki S."/>
            <person name="Young S.K."/>
            <person name="Zeng Q."/>
            <person name="Zimmer A.R."/>
            <person name="Rosenthal A."/>
            <person name="Birren B.W."/>
            <person name="Platzer M."/>
            <person name="Shimizu N."/>
            <person name="Lander E.S."/>
        </authorList>
    </citation>
    <scope>NUCLEOTIDE SEQUENCE [LARGE SCALE GENOMIC DNA]</scope>
</reference>
<reference key="6">
    <citation type="journal article" date="2004" name="Genome Res.">
        <title>The status, quality, and expansion of the NIH full-length cDNA project: the Mammalian Gene Collection (MGC).</title>
        <authorList>
            <consortium name="The MGC Project Team"/>
        </authorList>
    </citation>
    <scope>NUCLEOTIDE SEQUENCE [LARGE SCALE MRNA] (ISOFORM 1)</scope>
    <source>
        <tissue>Brain</tissue>
    </source>
</reference>
<reference key="7">
    <citation type="journal article" date="2013" name="J. Proteome Res.">
        <title>Toward a comprehensive characterization of a human cancer cell phosphoproteome.</title>
        <authorList>
            <person name="Zhou H."/>
            <person name="Di Palma S."/>
            <person name="Preisinger C."/>
            <person name="Peng M."/>
            <person name="Polat A.N."/>
            <person name="Heck A.J."/>
            <person name="Mohammed S."/>
        </authorList>
    </citation>
    <scope>PHOSPHORYLATION [LARGE SCALE ANALYSIS] AT SER-7</scope>
    <scope>IDENTIFICATION BY MASS SPECTROMETRY [LARGE SCALE ANALYSIS]</scope>
    <source>
        <tissue>Cervix carcinoma</tissue>
        <tissue>Erythroleukemia</tissue>
    </source>
</reference>
<reference key="8">
    <citation type="journal article" date="2013" name="Nature">
        <title>High-content genome-wide RNAi screens identify regulators of parkin upstream of mitophagy.</title>
        <authorList>
            <person name="Hasson S.A."/>
            <person name="Kane L.A."/>
            <person name="Yamano K."/>
            <person name="Huang C.H."/>
            <person name="Sliter D.A."/>
            <person name="Buehler E."/>
            <person name="Wang C."/>
            <person name="Heman-Ackah S.M."/>
            <person name="Hessa T."/>
            <person name="Guha R."/>
            <person name="Martin S.E."/>
            <person name="Youle R.J."/>
        </authorList>
    </citation>
    <scope>FUNCTION</scope>
    <scope>INTERACTION WITH PRKN</scope>
</reference>
<reference key="9">
    <citation type="journal article" date="2014" name="J. Proteomics">
        <title>An enzyme assisted RP-RPLC approach for in-depth analysis of human liver phosphoproteome.</title>
        <authorList>
            <person name="Bian Y."/>
            <person name="Song C."/>
            <person name="Cheng K."/>
            <person name="Dong M."/>
            <person name="Wang F."/>
            <person name="Huang J."/>
            <person name="Sun D."/>
            <person name="Wang L."/>
            <person name="Ye M."/>
            <person name="Zou H."/>
        </authorList>
    </citation>
    <scope>IDENTIFICATION BY MASS SPECTROMETRY [LARGE SCALE ANALYSIS]</scope>
    <source>
        <tissue>Liver</tissue>
    </source>
</reference>
<reference key="10">
    <citation type="journal article" date="2014" name="Mol. Cell. Proteomics">
        <title>Immunoaffinity enrichment and mass spectrometry analysis of protein methylation.</title>
        <authorList>
            <person name="Guo A."/>
            <person name="Gu H."/>
            <person name="Zhou J."/>
            <person name="Mulhern D."/>
            <person name="Wang Y."/>
            <person name="Lee K.A."/>
            <person name="Yang V."/>
            <person name="Aguiar M."/>
            <person name="Kornhauser J."/>
            <person name="Jia X."/>
            <person name="Ren J."/>
            <person name="Beausoleil S.A."/>
            <person name="Silva J.C."/>
            <person name="Vemulapalli V."/>
            <person name="Bedford M.T."/>
            <person name="Comb M.J."/>
        </authorList>
    </citation>
    <scope>METHYLATION [LARGE SCALE ANALYSIS] AT ARG-40; ARG-53; ARG-108 AND ARG-185</scope>
    <scope>IDENTIFICATION BY MASS SPECTROMETRY [LARGE SCALE ANALYSIS]</scope>
    <source>
        <tissue>Colon carcinoma</tissue>
    </source>
</reference>
<reference key="11">
    <citation type="journal article" date="2002" name="J. Biol. Chem.">
        <title>BAG4/SODD protein contains a short BAG domain.</title>
        <authorList>
            <person name="Briknarova K."/>
            <person name="Takayama S."/>
            <person name="Homma S."/>
            <person name="Baker K."/>
            <person name="Cabezas E."/>
            <person name="Hoyt D.W."/>
            <person name="Li Z."/>
            <person name="Satterthwait A.C."/>
            <person name="Ely K.R."/>
        </authorList>
    </citation>
    <scope>STRUCTURE BY NMR OF 376-457</scope>
    <scope>INTERACTION WITH HSP70</scope>
    <scope>MUTAGENESIS OF GLU-414; ASP-424; 438-ARG-LYS-439 AND GLN-446</scope>
</reference>